<evidence type="ECO:0000250" key="1"/>
<evidence type="ECO:0000250" key="2">
    <source>
        <dbReference type="UniProtKB" id="B2HS63"/>
    </source>
</evidence>
<evidence type="ECO:0000256" key="3">
    <source>
        <dbReference type="SAM" id="MobiDB-lite"/>
    </source>
</evidence>
<evidence type="ECO:0000269" key="4">
    <source>
    </source>
</evidence>
<evidence type="ECO:0000305" key="5"/>
<dbReference type="EC" id="3.2.2.n1"/>
<dbReference type="EMBL" id="AP005862">
    <property type="protein sequence ID" value="BAD46468.1"/>
    <property type="status" value="ALT_INIT"/>
    <property type="molecule type" value="Genomic_DNA"/>
</dbReference>
<dbReference type="EMBL" id="AP014965">
    <property type="protein sequence ID" value="BAT09265.1"/>
    <property type="molecule type" value="Genomic_DNA"/>
</dbReference>
<dbReference type="EMBL" id="AK062595">
    <property type="protein sequence ID" value="BAG88375.1"/>
    <property type="molecule type" value="mRNA"/>
</dbReference>
<dbReference type="RefSeq" id="XP_015611918.1">
    <property type="nucleotide sequence ID" value="XM_015756432.1"/>
</dbReference>
<dbReference type="SMR" id="B7E7M8"/>
<dbReference type="FunCoup" id="B7E7M8">
    <property type="interactions" value="10"/>
</dbReference>
<dbReference type="STRING" id="39947.B7E7M8"/>
<dbReference type="PaxDb" id="39947-B7E7M8"/>
<dbReference type="EnsemblPlants" id="Os09t0547500-01">
    <property type="protein sequence ID" value="Os09t0547500-01"/>
    <property type="gene ID" value="Os09g0547500"/>
</dbReference>
<dbReference type="Gramene" id="Os09t0547500-01">
    <property type="protein sequence ID" value="Os09t0547500-01"/>
    <property type="gene ID" value="Os09g0547500"/>
</dbReference>
<dbReference type="eggNOG" id="ENOG502QSR9">
    <property type="taxonomic scope" value="Eukaryota"/>
</dbReference>
<dbReference type="HOGENOM" id="CLU_058336_2_0_1"/>
<dbReference type="InParanoid" id="B7E7M8"/>
<dbReference type="OMA" id="WEVEQVG"/>
<dbReference type="OrthoDB" id="414463at2759"/>
<dbReference type="Proteomes" id="UP000000763">
    <property type="component" value="Chromosome 9"/>
</dbReference>
<dbReference type="Proteomes" id="UP000059680">
    <property type="component" value="Chromosome 9"/>
</dbReference>
<dbReference type="GO" id="GO:0005829">
    <property type="term" value="C:cytosol"/>
    <property type="evidence" value="ECO:0000318"/>
    <property type="project" value="GO_Central"/>
</dbReference>
<dbReference type="GO" id="GO:0005634">
    <property type="term" value="C:nucleus"/>
    <property type="evidence" value="ECO:0000318"/>
    <property type="project" value="GO_Central"/>
</dbReference>
<dbReference type="GO" id="GO:0102682">
    <property type="term" value="F:cytokinin riboside 5'-monophosphate phosphoribohydrolase activity"/>
    <property type="evidence" value="ECO:0000318"/>
    <property type="project" value="GO_Central"/>
</dbReference>
<dbReference type="GO" id="GO:0009691">
    <property type="term" value="P:cytokinin biosynthetic process"/>
    <property type="evidence" value="ECO:0000318"/>
    <property type="project" value="GO_Central"/>
</dbReference>
<dbReference type="FunFam" id="3.40.50.450:FF:000005">
    <property type="entry name" value="CASP-like protein"/>
    <property type="match status" value="1"/>
</dbReference>
<dbReference type="Gene3D" id="3.40.50.450">
    <property type="match status" value="1"/>
</dbReference>
<dbReference type="InterPro" id="IPR005269">
    <property type="entry name" value="LOG"/>
</dbReference>
<dbReference type="InterPro" id="IPR031100">
    <property type="entry name" value="LOG_fam"/>
</dbReference>
<dbReference type="NCBIfam" id="TIGR00730">
    <property type="entry name" value="Rossman fold protein, TIGR00730 family"/>
    <property type="match status" value="1"/>
</dbReference>
<dbReference type="PANTHER" id="PTHR31223:SF14">
    <property type="entry name" value="CYTOKININ RIBOSIDE 5'-MONOPHOSPHATE PHOSPHORIBOHYDROLASE LOG5"/>
    <property type="match status" value="1"/>
</dbReference>
<dbReference type="PANTHER" id="PTHR31223">
    <property type="entry name" value="LOG FAMILY PROTEIN YJL055W"/>
    <property type="match status" value="1"/>
</dbReference>
<dbReference type="Pfam" id="PF03641">
    <property type="entry name" value="Lysine_decarbox"/>
    <property type="match status" value="1"/>
</dbReference>
<dbReference type="SUPFAM" id="SSF102405">
    <property type="entry name" value="MCP/YpsA-like"/>
    <property type="match status" value="1"/>
</dbReference>
<accession>B7E7M8</accession>
<accession>A0A0P0XR83</accession>
<accession>Q651P9</accession>
<proteinExistence type="evidence at transcript level"/>
<organism>
    <name type="scientific">Oryza sativa subsp. japonica</name>
    <name type="common">Rice</name>
    <dbReference type="NCBI Taxonomy" id="39947"/>
    <lineage>
        <taxon>Eukaryota</taxon>
        <taxon>Viridiplantae</taxon>
        <taxon>Streptophyta</taxon>
        <taxon>Embryophyta</taxon>
        <taxon>Tracheophyta</taxon>
        <taxon>Spermatophyta</taxon>
        <taxon>Magnoliopsida</taxon>
        <taxon>Liliopsida</taxon>
        <taxon>Poales</taxon>
        <taxon>Poaceae</taxon>
        <taxon>BOP clade</taxon>
        <taxon>Oryzoideae</taxon>
        <taxon>Oryzeae</taxon>
        <taxon>Oryzinae</taxon>
        <taxon>Oryza</taxon>
        <taxon>Oryza sativa</taxon>
    </lineage>
</organism>
<gene>
    <name type="primary">LOGL9</name>
    <name type="ordered locus">Os09g0547500</name>
    <name type="ordered locus">LOC_Os09g37540</name>
    <name type="ORF">OSJNBa0038K02.28</name>
</gene>
<comment type="function">
    <text evidence="1">Cytokinin-activating enzyme working in the direct activation pathway. Phosphoribohydrolase that converts inactive cytokinin nucleotides to the biologically active free-base forms (By similarity).</text>
</comment>
<comment type="catalytic activity">
    <reaction>
        <text>N(6)-(dimethylallyl)adenosine 5'-phosphate + H2O = N(6)-dimethylallyladenine + D-ribose 5-phosphate</text>
        <dbReference type="Rhea" id="RHEA:48560"/>
        <dbReference type="ChEBI" id="CHEBI:15377"/>
        <dbReference type="ChEBI" id="CHEBI:17660"/>
        <dbReference type="ChEBI" id="CHEBI:57526"/>
        <dbReference type="ChEBI" id="CHEBI:78346"/>
        <dbReference type="EC" id="3.2.2.n1"/>
    </reaction>
</comment>
<comment type="catalytic activity">
    <reaction>
        <text>9-ribosyl-trans-zeatin 5'-phosphate + H2O = trans-zeatin + D-ribose 5-phosphate</text>
        <dbReference type="Rhea" id="RHEA:48564"/>
        <dbReference type="ChEBI" id="CHEBI:15377"/>
        <dbReference type="ChEBI" id="CHEBI:16522"/>
        <dbReference type="ChEBI" id="CHEBI:78346"/>
        <dbReference type="ChEBI" id="CHEBI:87947"/>
        <dbReference type="EC" id="3.2.2.n1"/>
    </reaction>
</comment>
<comment type="tissue specificity">
    <text evidence="4">Expressed in roots, leaves and stems.</text>
</comment>
<comment type="similarity">
    <text evidence="5">Belongs to the LOG family.</text>
</comment>
<comment type="sequence caution" evidence="5">
    <conflict type="erroneous initiation">
        <sequence resource="EMBL-CDS" id="BAD46468"/>
    </conflict>
    <text>Truncated N-terminus.</text>
</comment>
<feature type="chain" id="PRO_0000395061" description="Probable cytokinin riboside 5'-monophosphate phosphoribohydrolase LOGL9">
    <location>
        <begin position="1"/>
        <end position="227"/>
    </location>
</feature>
<feature type="region of interest" description="Disordered" evidence="3">
    <location>
        <begin position="1"/>
        <end position="26"/>
    </location>
</feature>
<feature type="compositionally biased region" description="Polar residues" evidence="3">
    <location>
        <begin position="1"/>
        <end position="15"/>
    </location>
</feature>
<feature type="binding site" evidence="2">
    <location>
        <position position="117"/>
    </location>
    <ligand>
        <name>substrate</name>
    </ligand>
</feature>
<feature type="binding site" evidence="2">
    <location>
        <begin position="135"/>
        <end position="136"/>
    </location>
    <ligand>
        <name>substrate</name>
    </ligand>
</feature>
<feature type="binding site" evidence="2">
    <location>
        <begin position="152"/>
        <end position="158"/>
    </location>
    <ligand>
        <name>substrate</name>
    </ligand>
</feature>
<sequence length="227" mass="24312">MYISSPHTSHFTSIDRSPAVVSESDRSMEEAAAAADMNGGVHQSRFRRVCVFCGSSSGKRRSYRDAAVELGKELVARKVDLVYGGGSLGLMGEVAEAVRNGGGHVIGVIPTTLMGKEVTGETVGEVREVGSMHERKAEMARRSDAFVALPGGYGTLEEVVEVIAWAQLGIHAKPVGLLNVDGYYDFLLAFVDKAVADGFIPPSHRHLFVSAPDAPSLVHKLEEYVPV</sequence>
<reference key="1">
    <citation type="journal article" date="2005" name="Nature">
        <title>The map-based sequence of the rice genome.</title>
        <authorList>
            <consortium name="International rice genome sequencing project (IRGSP)"/>
        </authorList>
    </citation>
    <scope>NUCLEOTIDE SEQUENCE [LARGE SCALE GENOMIC DNA]</scope>
    <source>
        <strain>cv. Nipponbare</strain>
    </source>
</reference>
<reference key="2">
    <citation type="journal article" date="2013" name="Rice">
        <title>Improvement of the Oryza sativa Nipponbare reference genome using next generation sequence and optical map data.</title>
        <authorList>
            <person name="Kawahara Y."/>
            <person name="de la Bastide M."/>
            <person name="Hamilton J.P."/>
            <person name="Kanamori H."/>
            <person name="McCombie W.R."/>
            <person name="Ouyang S."/>
            <person name="Schwartz D.C."/>
            <person name="Tanaka T."/>
            <person name="Wu J."/>
            <person name="Zhou S."/>
            <person name="Childs K.L."/>
            <person name="Davidson R.M."/>
            <person name="Lin H."/>
            <person name="Quesada-Ocampo L."/>
            <person name="Vaillancourt B."/>
            <person name="Sakai H."/>
            <person name="Lee S.S."/>
            <person name="Kim J."/>
            <person name="Numa H."/>
            <person name="Itoh T."/>
            <person name="Buell C.R."/>
            <person name="Matsumoto T."/>
        </authorList>
    </citation>
    <scope>GENOME REANNOTATION</scope>
    <source>
        <strain>cv. Nipponbare</strain>
    </source>
</reference>
<reference key="3">
    <citation type="journal article" date="2003" name="Science">
        <title>Collection, mapping, and annotation of over 28,000 cDNA clones from japonica rice.</title>
        <authorList>
            <consortium name="The rice full-length cDNA consortium"/>
        </authorList>
    </citation>
    <scope>NUCLEOTIDE SEQUENCE [LARGE SCALE MRNA]</scope>
    <source>
        <strain>cv. Nipponbare</strain>
    </source>
</reference>
<reference key="4">
    <citation type="journal article" date="2007" name="Nature">
        <title>Direct control of shoot meristem activity by a cytokinin-activating enzyme.</title>
        <authorList>
            <person name="Kurakawa T."/>
            <person name="Ueda N."/>
            <person name="Maekawa M."/>
            <person name="Kobayashi K."/>
            <person name="Kojima M."/>
            <person name="Nagato Y."/>
            <person name="Sakakibara H."/>
            <person name="Kyozuka J."/>
        </authorList>
    </citation>
    <scope>IDENTIFICATION</scope>
    <scope>TISSUE SPECIFICITY</scope>
</reference>
<reference key="5">
    <citation type="journal article" date="2009" name="Plant Cell">
        <title>Functional analyses of LONELY GUY cytokinin-activating enzymes reveal the importance of the direct activation pathway in Arabidopsis.</title>
        <authorList>
            <person name="Kuroha T."/>
            <person name="Tokunaga H."/>
            <person name="Kojima M."/>
            <person name="Ueda N."/>
            <person name="Ishida T."/>
            <person name="Nagawa S."/>
            <person name="Fukuda H."/>
            <person name="Sugimoto K."/>
            <person name="Sakakibara H."/>
        </authorList>
    </citation>
    <scope>GENE FAMILY</scope>
    <scope>NOMENCLATURE</scope>
</reference>
<protein>
    <recommendedName>
        <fullName>Probable cytokinin riboside 5'-monophosphate phosphoribohydrolase LOGL9</fullName>
        <ecNumber>3.2.2.n1</ecNumber>
    </recommendedName>
    <alternativeName>
        <fullName>Protein LONELY GUY-like 9</fullName>
    </alternativeName>
</protein>
<name>LOGL9_ORYSJ</name>
<keyword id="KW-0203">Cytokinin biosynthesis</keyword>
<keyword id="KW-0378">Hydrolase</keyword>
<keyword id="KW-1185">Reference proteome</keyword>